<protein>
    <recommendedName>
        <fullName evidence="1">DNA-directed RNA polymerase subunit omega</fullName>
        <shortName evidence="1">RNAP omega subunit</shortName>
        <ecNumber evidence="1">2.7.7.6</ecNumber>
    </recommendedName>
    <alternativeName>
        <fullName evidence="1">RNA polymerase omega subunit</fullName>
    </alternativeName>
    <alternativeName>
        <fullName evidence="1">Transcriptase subunit omega</fullName>
    </alternativeName>
</protein>
<accession>C1CFV9</accession>
<comment type="function">
    <text evidence="1">Promotes RNA polymerase assembly. Latches the N- and C-terminal regions of the beta' subunit thereby facilitating its interaction with the beta and alpha subunits.</text>
</comment>
<comment type="catalytic activity">
    <reaction evidence="1">
        <text>RNA(n) + a ribonucleoside 5'-triphosphate = RNA(n+1) + diphosphate</text>
        <dbReference type="Rhea" id="RHEA:21248"/>
        <dbReference type="Rhea" id="RHEA-COMP:14527"/>
        <dbReference type="Rhea" id="RHEA-COMP:17342"/>
        <dbReference type="ChEBI" id="CHEBI:33019"/>
        <dbReference type="ChEBI" id="CHEBI:61557"/>
        <dbReference type="ChEBI" id="CHEBI:140395"/>
        <dbReference type="EC" id="2.7.7.6"/>
    </reaction>
</comment>
<comment type="subunit">
    <text evidence="1">The RNAP catalytic core consists of 2 alpha, 1 beta, 1 beta' and 1 omega subunit. When a sigma factor is associated with the core the holoenzyme is formed, which can initiate transcription.</text>
</comment>
<comment type="similarity">
    <text evidence="1">Belongs to the RNA polymerase subunit omega family.</text>
</comment>
<dbReference type="EC" id="2.7.7.6" evidence="1"/>
<dbReference type="EMBL" id="CP000919">
    <property type="protein sequence ID" value="ACO19654.1"/>
    <property type="molecule type" value="Genomic_DNA"/>
</dbReference>
<dbReference type="SMR" id="C1CFV9"/>
<dbReference type="KEGG" id="sjj:SPJ_1633"/>
<dbReference type="HOGENOM" id="CLU_125406_0_0_9"/>
<dbReference type="Proteomes" id="UP000002206">
    <property type="component" value="Chromosome"/>
</dbReference>
<dbReference type="GO" id="GO:0000428">
    <property type="term" value="C:DNA-directed RNA polymerase complex"/>
    <property type="evidence" value="ECO:0007669"/>
    <property type="project" value="UniProtKB-KW"/>
</dbReference>
<dbReference type="GO" id="GO:0003677">
    <property type="term" value="F:DNA binding"/>
    <property type="evidence" value="ECO:0007669"/>
    <property type="project" value="UniProtKB-UniRule"/>
</dbReference>
<dbReference type="GO" id="GO:0003899">
    <property type="term" value="F:DNA-directed RNA polymerase activity"/>
    <property type="evidence" value="ECO:0007669"/>
    <property type="project" value="UniProtKB-UniRule"/>
</dbReference>
<dbReference type="GO" id="GO:0006351">
    <property type="term" value="P:DNA-templated transcription"/>
    <property type="evidence" value="ECO:0007669"/>
    <property type="project" value="UniProtKB-UniRule"/>
</dbReference>
<dbReference type="Gene3D" id="3.90.940.10">
    <property type="match status" value="1"/>
</dbReference>
<dbReference type="HAMAP" id="MF_00366">
    <property type="entry name" value="RNApol_bact_RpoZ"/>
    <property type="match status" value="1"/>
</dbReference>
<dbReference type="InterPro" id="IPR003716">
    <property type="entry name" value="DNA-dir_RNA_pol_omega"/>
</dbReference>
<dbReference type="InterPro" id="IPR006110">
    <property type="entry name" value="Pol_omega/Rpo6/RPB6"/>
</dbReference>
<dbReference type="InterPro" id="IPR036161">
    <property type="entry name" value="RPB6/omega-like_sf"/>
</dbReference>
<dbReference type="NCBIfam" id="TIGR00690">
    <property type="entry name" value="rpoZ"/>
    <property type="match status" value="1"/>
</dbReference>
<dbReference type="PANTHER" id="PTHR34476">
    <property type="entry name" value="DNA-DIRECTED RNA POLYMERASE SUBUNIT OMEGA"/>
    <property type="match status" value="1"/>
</dbReference>
<dbReference type="PANTHER" id="PTHR34476:SF1">
    <property type="entry name" value="DNA-DIRECTED RNA POLYMERASE SUBUNIT OMEGA"/>
    <property type="match status" value="1"/>
</dbReference>
<dbReference type="Pfam" id="PF01192">
    <property type="entry name" value="RNA_pol_Rpb6"/>
    <property type="match status" value="1"/>
</dbReference>
<dbReference type="SMART" id="SM01409">
    <property type="entry name" value="RNA_pol_Rpb6"/>
    <property type="match status" value="1"/>
</dbReference>
<dbReference type="SUPFAM" id="SSF63562">
    <property type="entry name" value="RPB6/omega subunit-like"/>
    <property type="match status" value="1"/>
</dbReference>
<evidence type="ECO:0000255" key="1">
    <source>
        <dbReference type="HAMAP-Rule" id="MF_00366"/>
    </source>
</evidence>
<evidence type="ECO:0000256" key="2">
    <source>
        <dbReference type="SAM" id="MobiDB-lite"/>
    </source>
</evidence>
<reference key="1">
    <citation type="journal article" date="2010" name="Genome Biol.">
        <title>Structure and dynamics of the pan-genome of Streptococcus pneumoniae and closely related species.</title>
        <authorList>
            <person name="Donati C."/>
            <person name="Hiller N.L."/>
            <person name="Tettelin H."/>
            <person name="Muzzi A."/>
            <person name="Croucher N.J."/>
            <person name="Angiuoli S.V."/>
            <person name="Oggioni M."/>
            <person name="Dunning Hotopp J.C."/>
            <person name="Hu F.Z."/>
            <person name="Riley D.R."/>
            <person name="Covacci A."/>
            <person name="Mitchell T.J."/>
            <person name="Bentley S.D."/>
            <person name="Kilian M."/>
            <person name="Ehrlich G.D."/>
            <person name="Rappuoli R."/>
            <person name="Moxon E.R."/>
            <person name="Masignani V."/>
        </authorList>
    </citation>
    <scope>NUCLEOTIDE SEQUENCE [LARGE SCALE GENOMIC DNA]</scope>
    <source>
        <strain>JJA</strain>
    </source>
</reference>
<feature type="chain" id="PRO_1000133755" description="DNA-directed RNA polymerase subunit omega">
    <location>
        <begin position="1"/>
        <end position="103"/>
    </location>
</feature>
<feature type="region of interest" description="Disordered" evidence="2">
    <location>
        <begin position="52"/>
        <end position="103"/>
    </location>
</feature>
<feature type="compositionally biased region" description="Basic and acidic residues" evidence="2">
    <location>
        <begin position="62"/>
        <end position="103"/>
    </location>
</feature>
<organism>
    <name type="scientific">Streptococcus pneumoniae (strain JJA)</name>
    <dbReference type="NCBI Taxonomy" id="488222"/>
    <lineage>
        <taxon>Bacteria</taxon>
        <taxon>Bacillati</taxon>
        <taxon>Bacillota</taxon>
        <taxon>Bacilli</taxon>
        <taxon>Lactobacillales</taxon>
        <taxon>Streptococcaceae</taxon>
        <taxon>Streptococcus</taxon>
    </lineage>
</organism>
<name>RPOZ_STRZJ</name>
<keyword id="KW-0240">DNA-directed RNA polymerase</keyword>
<keyword id="KW-0548">Nucleotidyltransferase</keyword>
<keyword id="KW-0804">Transcription</keyword>
<keyword id="KW-0808">Transferase</keyword>
<sequence>MLKPSIDTLLDKVPSKYSLVILEAKRAHELEAGAPATQGFKSEKSTLRALEEIESGNVTIHPDPEGKREAVRRRIEEEKRRKEEEEKKIKEQIAKEKEDGEKI</sequence>
<gene>
    <name evidence="1" type="primary">rpoZ</name>
    <name type="ordered locus">SPJ_1633</name>
</gene>
<proteinExistence type="inferred from homology"/>